<reference key="1">
    <citation type="journal article" date="1995" name="Appl. Environ. Microbiol.">
        <title>Conservation of the genes for dissimilatory sulfite reductase from Desulfovibrio vulgaris and Archaeoglobus fulgidus allows their detection by PCR.</title>
        <authorList>
            <person name="Karkhoff-Schweizer R.R."/>
            <person name="Huber D.P.W."/>
            <person name="Voordouw G."/>
        </authorList>
    </citation>
    <scope>NUCLEOTIDE SEQUENCE [GENOMIC DNA]</scope>
</reference>
<reference key="2">
    <citation type="journal article" date="2004" name="Nat. Biotechnol.">
        <title>The genome sequence of the anaerobic, sulfate-reducing bacterium Desulfovibrio vulgaris Hildenborough.</title>
        <authorList>
            <person name="Heidelberg J.F."/>
            <person name="Seshadri R."/>
            <person name="Haveman S.A."/>
            <person name="Hemme C.L."/>
            <person name="Paulsen I.T."/>
            <person name="Kolonay J.F."/>
            <person name="Eisen J.A."/>
            <person name="Ward N.L."/>
            <person name="Methe B.A."/>
            <person name="Brinkac L.M."/>
            <person name="Daugherty S.C."/>
            <person name="DeBoy R.T."/>
            <person name="Dodson R.J."/>
            <person name="Durkin A.S."/>
            <person name="Madupu R."/>
            <person name="Nelson W.C."/>
            <person name="Sullivan S.A."/>
            <person name="Fouts D.E."/>
            <person name="Haft D.H."/>
            <person name="Selengut J."/>
            <person name="Peterson J.D."/>
            <person name="Davidsen T.M."/>
            <person name="Zafar N."/>
            <person name="Zhou L."/>
            <person name="Radune D."/>
            <person name="Dimitrov G."/>
            <person name="Hance M."/>
            <person name="Tran K."/>
            <person name="Khouri H.M."/>
            <person name="Gill J."/>
            <person name="Utterback T.R."/>
            <person name="Feldblyum T.V."/>
            <person name="Wall J.D."/>
            <person name="Voordouw G."/>
            <person name="Fraser C.M."/>
        </authorList>
    </citation>
    <scope>NUCLEOTIDE SEQUENCE [LARGE SCALE GENOMIC DNA]</scope>
    <source>
        <strain>ATCC 29579 / DSM 644 / CCUG 34227 / NCIMB 8303 / VKM B-1760 / Hildenborough</strain>
    </source>
</reference>
<gene>
    <name type="primary">dsvD</name>
    <name type="ordered locus">DVU_0404</name>
</gene>
<evidence type="ECO:0000305" key="1"/>
<evidence type="ECO:0007829" key="2">
    <source>
        <dbReference type="PDB" id="1UCR"/>
    </source>
</evidence>
<name>DSVD_NITV2</name>
<dbReference type="EMBL" id="U16723">
    <property type="protein sequence ID" value="AAA70109.1"/>
    <property type="molecule type" value="Genomic_DNA"/>
</dbReference>
<dbReference type="EMBL" id="AE017285">
    <property type="protein sequence ID" value="AAS94887.1"/>
    <property type="molecule type" value="Genomic_DNA"/>
</dbReference>
<dbReference type="RefSeq" id="WP_010937711.1">
    <property type="nucleotide sequence ID" value="NC_002937.3"/>
</dbReference>
<dbReference type="RefSeq" id="YP_009628.1">
    <property type="nucleotide sequence ID" value="NC_002937.3"/>
</dbReference>
<dbReference type="PDB" id="1UCR">
    <property type="method" value="X-ray"/>
    <property type="resolution" value="1.20 A"/>
    <property type="chains" value="A/B=1-78"/>
</dbReference>
<dbReference type="PDB" id="1WQ2">
    <property type="method" value="Neutron"/>
    <property type="resolution" value="2.40 A"/>
    <property type="chains" value="A/B=1-78"/>
</dbReference>
<dbReference type="PDBsum" id="1UCR"/>
<dbReference type="PDBsum" id="1WQ2"/>
<dbReference type="SMR" id="Q46582"/>
<dbReference type="IntAct" id="Q46582">
    <property type="interactions" value="3"/>
</dbReference>
<dbReference type="STRING" id="882.DVU_0404"/>
<dbReference type="PaxDb" id="882-DVU_0404"/>
<dbReference type="EnsemblBacteria" id="AAS94887">
    <property type="protein sequence ID" value="AAS94887"/>
    <property type="gene ID" value="DVU_0404"/>
</dbReference>
<dbReference type="KEGG" id="dvu:DVU_0404"/>
<dbReference type="PATRIC" id="fig|882.5.peg.381"/>
<dbReference type="eggNOG" id="ENOG5033191">
    <property type="taxonomic scope" value="Bacteria"/>
</dbReference>
<dbReference type="HOGENOM" id="CLU_196901_0_0_7"/>
<dbReference type="OrthoDB" id="5459227at2"/>
<dbReference type="EvolutionaryTrace" id="Q46582"/>
<dbReference type="Proteomes" id="UP000002194">
    <property type="component" value="Chromosome"/>
</dbReference>
<dbReference type="Gene3D" id="1.10.10.10">
    <property type="entry name" value="Winged helix-like DNA-binding domain superfamily/Winged helix DNA-binding domain"/>
    <property type="match status" value="1"/>
</dbReference>
<dbReference type="InterPro" id="IPR014793">
    <property type="entry name" value="DsrD"/>
</dbReference>
<dbReference type="InterPro" id="IPR036388">
    <property type="entry name" value="WH-like_DNA-bd_sf"/>
</dbReference>
<dbReference type="InterPro" id="IPR036390">
    <property type="entry name" value="WH_DNA-bd_sf"/>
</dbReference>
<dbReference type="Pfam" id="PF08679">
    <property type="entry name" value="DsrD"/>
    <property type="match status" value="1"/>
</dbReference>
<dbReference type="SUPFAM" id="SSF46785">
    <property type="entry name" value="Winged helix' DNA-binding domain"/>
    <property type="match status" value="1"/>
</dbReference>
<organism>
    <name type="scientific">Nitratidesulfovibrio vulgaris (strain ATCC 29579 / DSM 644 / CCUG 34227 / NCIMB 8303 / VKM B-1760 / Hildenborough)</name>
    <name type="common">Desulfovibrio vulgaris</name>
    <dbReference type="NCBI Taxonomy" id="882"/>
    <lineage>
        <taxon>Bacteria</taxon>
        <taxon>Pseudomonadati</taxon>
        <taxon>Thermodesulfobacteriota</taxon>
        <taxon>Desulfovibrionia</taxon>
        <taxon>Desulfovibrionales</taxon>
        <taxon>Desulfovibrionaceae</taxon>
        <taxon>Nitratidesulfovibrio</taxon>
    </lineage>
</organism>
<comment type="function">
    <text>May play an essential role in dissimilatory sulfite reduction.</text>
</comment>
<comment type="similarity">
    <text evidence="1">To A.fulgidus DsrD.</text>
</comment>
<keyword id="KW-0002">3D-structure</keyword>
<keyword id="KW-1185">Reference proteome</keyword>
<accession>Q46582</accession>
<protein>
    <recommendedName>
        <fullName>Protein DsvD</fullName>
    </recommendedName>
</protein>
<proteinExistence type="evidence at protein level"/>
<feature type="chain" id="PRO_0000080034" description="Protein DsvD">
    <location>
        <begin position="1"/>
        <end position="78"/>
    </location>
</feature>
<feature type="helix" evidence="2">
    <location>
        <begin position="3"/>
        <end position="12"/>
    </location>
</feature>
<feature type="helix" evidence="2">
    <location>
        <begin position="15"/>
        <end position="18"/>
    </location>
</feature>
<feature type="helix" evidence="2">
    <location>
        <begin position="24"/>
        <end position="30"/>
    </location>
</feature>
<feature type="helix" evidence="2">
    <location>
        <begin position="36"/>
        <end position="48"/>
    </location>
</feature>
<feature type="strand" evidence="2">
    <location>
        <begin position="51"/>
        <end position="57"/>
    </location>
</feature>
<feature type="strand" evidence="2">
    <location>
        <begin position="60"/>
        <end position="65"/>
    </location>
</feature>
<feature type="helix" evidence="2">
    <location>
        <begin position="68"/>
        <end position="73"/>
    </location>
</feature>
<sequence>MEEAKQKVVDFLNSKSGSKSKFYFNDFTDLFPDMKQREVKKILTALVNDEVLEYWSSGSTTMYGLKGAGKQAAAEHED</sequence>